<reference key="1">
    <citation type="journal article" date="2008" name="DNA Res.">
        <title>Complete genome sequence and comparative analysis of the wild-type commensal Escherichia coli strain SE11 isolated from a healthy adult.</title>
        <authorList>
            <person name="Oshima K."/>
            <person name="Toh H."/>
            <person name="Ogura Y."/>
            <person name="Sasamoto H."/>
            <person name="Morita H."/>
            <person name="Park S.-H."/>
            <person name="Ooka T."/>
            <person name="Iyoda S."/>
            <person name="Taylor T.D."/>
            <person name="Hayashi T."/>
            <person name="Itoh K."/>
            <person name="Hattori M."/>
        </authorList>
    </citation>
    <scope>NUCLEOTIDE SEQUENCE [LARGE SCALE GENOMIC DNA]</scope>
    <source>
        <strain>SE11</strain>
    </source>
</reference>
<name>ECPA_ECOSE</name>
<keyword id="KW-0281">Fimbrium</keyword>
<keyword id="KW-0732">Signal</keyword>
<organism>
    <name type="scientific">Escherichia coli (strain SE11)</name>
    <dbReference type="NCBI Taxonomy" id="409438"/>
    <lineage>
        <taxon>Bacteria</taxon>
        <taxon>Pseudomonadati</taxon>
        <taxon>Pseudomonadota</taxon>
        <taxon>Gammaproteobacteria</taxon>
        <taxon>Enterobacterales</taxon>
        <taxon>Enterobacteriaceae</taxon>
        <taxon>Escherichia</taxon>
    </lineage>
</organism>
<feature type="signal peptide" evidence="2">
    <location>
        <begin position="1"/>
        <end position="22"/>
    </location>
</feature>
<feature type="chain" id="PRO_0000367923" description="Common pilus major fimbrillin subunit EcpA">
    <location>
        <begin position="23"/>
        <end position="195"/>
    </location>
</feature>
<proteinExistence type="inferred from homology"/>
<sequence>MKKKVLAIALVTVFTGMGVAQAADVTAQAVATWSATAKKDTTSKLVVTPLGSLAFQYAEGIKGFNSQKGLFDVAIEGDSTATAFKLTSRLITNTLTQLDTSGSTLNVGVDYNGAAVEKTGDTVMIDTANGVLGGNLSPLANGYNASNRTTAQDGFTFTIISGTTNGTTAVTDYSTLPEGIWSGDVSVQFDATWTS</sequence>
<protein>
    <recommendedName>
        <fullName>Common pilus major fimbrillin subunit EcpA</fullName>
    </recommendedName>
    <alternativeName>
        <fullName>MatB fimbrillin</fullName>
    </alternativeName>
</protein>
<evidence type="ECO:0000250" key="1"/>
<evidence type="ECO:0000255" key="2"/>
<evidence type="ECO:0000305" key="3"/>
<comment type="function">
    <text evidence="1">Part of the ecpRABCDE operon, which encodes the E.coli common pilus (ECP). ECP is found in both commensal and pathogenic strains and plays a dual role in early-stage biofilm development and host cell recognition. Major subunit of the fimbria (By similarity).</text>
</comment>
<comment type="subunit">
    <text evidence="1">Self-associates. Forms filaments. Interacts with EcpD (By similarity).</text>
</comment>
<comment type="subcellular location">
    <subcellularLocation>
        <location evidence="1">Fimbrium</location>
    </subcellularLocation>
</comment>
<comment type="induction">
    <text evidence="1">Negatively regulated by H-NS. Positively regulated by IHF and EcpR (By similarity).</text>
</comment>
<comment type="similarity">
    <text evidence="3">Belongs to the EcpA/MatB fimbrillin family.</text>
</comment>
<gene>
    <name type="primary">ecpA</name>
    <name type="synonym">matB</name>
    <name type="ordered locus">ECSE_0311</name>
</gene>
<accession>B6I081</accession>
<dbReference type="EMBL" id="AP009240">
    <property type="protein sequence ID" value="BAG75835.1"/>
    <property type="molecule type" value="Genomic_DNA"/>
</dbReference>
<dbReference type="RefSeq" id="WP_000730974.1">
    <property type="nucleotide sequence ID" value="NC_011415.1"/>
</dbReference>
<dbReference type="SMR" id="B6I081"/>
<dbReference type="GeneID" id="75170261"/>
<dbReference type="KEGG" id="ecy:ECSE_0311"/>
<dbReference type="HOGENOM" id="CLU_120328_0_0_6"/>
<dbReference type="Proteomes" id="UP000008199">
    <property type="component" value="Chromosome"/>
</dbReference>
<dbReference type="GO" id="GO:0009289">
    <property type="term" value="C:pilus"/>
    <property type="evidence" value="ECO:0007669"/>
    <property type="project" value="UniProtKB-SubCell"/>
</dbReference>
<dbReference type="Gene3D" id="2.60.40.3290">
    <property type="entry name" value="Fimbrial protein EcpA"/>
    <property type="match status" value="1"/>
</dbReference>
<dbReference type="InterPro" id="IPR016514">
    <property type="entry name" value="EcpA"/>
</dbReference>
<dbReference type="InterPro" id="IPR038478">
    <property type="entry name" value="Fimbrillin_EcpA_sf"/>
</dbReference>
<dbReference type="Pfam" id="PF16449">
    <property type="entry name" value="MatB"/>
    <property type="match status" value="1"/>
</dbReference>
<dbReference type="PIRSF" id="PIRSF007320">
    <property type="entry name" value="Fimbrillin_MatB"/>
    <property type="match status" value="1"/>
</dbReference>